<sequence>MLNPSRKLVELVRILDEGGFIFSGDPVQATEALRRVDGSTEEKIIRRAEMIDRNRMLRETLERVRAGSFWLWVVAATFAFFTGFSVTYLLMDNQGLNFFLVLAGVLGMNTLMLAVWLAMLFLRVKVGRFFSSPATWFRGKDPVNQAVLRLYADEWRQPSVRWKIGATSHSLWLCTLLGMLVSVLLLLLVRQYTFNWESTLLSNAASVRAVEMLAWLPSKLGFPVPDARAVIEGRLNGNIADARAWSGLLVGSIACYGILPRLLAWVVCKILLKTSENGLDLEKPYYQAVIRRWQNKITDADTRRETVSAVSPKIILNDAPKWAVMLETEWQDGEWFEGRLAQEWLDKGVATNREQVAALETELKQKPAQLLIGVRAQTVPDRGVLRQIVRLSEAAQGGAVVQLLAEQGLSDDLSEKLEHWRNALAECGAAWLEPDRAAQEGRLKDQ</sequence>
<accession>Q9JYD0</accession>
<evidence type="ECO:0000255" key="1"/>
<evidence type="ECO:0000305" key="2"/>
<feature type="chain" id="PRO_0000320336" description="Uncharacterized membrane protein NMB1645">
    <location>
        <begin position="1"/>
        <end position="446"/>
    </location>
</feature>
<feature type="transmembrane region" description="Helical" evidence="1">
    <location>
        <begin position="69"/>
        <end position="89"/>
    </location>
</feature>
<feature type="transmembrane region" description="Helical" evidence="1">
    <location>
        <begin position="98"/>
        <end position="118"/>
    </location>
</feature>
<feature type="transmembrane region" description="Helical" evidence="1">
    <location>
        <begin position="169"/>
        <end position="189"/>
    </location>
</feature>
<feature type="transmembrane region" description="Helical" evidence="1">
    <location>
        <begin position="247"/>
        <end position="267"/>
    </location>
</feature>
<keyword id="KW-0472">Membrane</keyword>
<keyword id="KW-1185">Reference proteome</keyword>
<keyword id="KW-0812">Transmembrane</keyword>
<keyword id="KW-1133">Transmembrane helix</keyword>
<organism>
    <name type="scientific">Neisseria meningitidis serogroup B (strain ATCC BAA-335 / MC58)</name>
    <dbReference type="NCBI Taxonomy" id="122586"/>
    <lineage>
        <taxon>Bacteria</taxon>
        <taxon>Pseudomonadati</taxon>
        <taxon>Pseudomonadota</taxon>
        <taxon>Betaproteobacteria</taxon>
        <taxon>Neisseriales</taxon>
        <taxon>Neisseriaceae</taxon>
        <taxon>Neisseria</taxon>
    </lineage>
</organism>
<dbReference type="EMBL" id="AE002098">
    <property type="protein sequence ID" value="AAF41994.1"/>
    <property type="molecule type" value="Genomic_DNA"/>
</dbReference>
<dbReference type="PIR" id="D81058">
    <property type="entry name" value="D81058"/>
</dbReference>
<dbReference type="RefSeq" id="NP_274650.1">
    <property type="nucleotide sequence ID" value="NC_003112.2"/>
</dbReference>
<dbReference type="RefSeq" id="WP_002224998.1">
    <property type="nucleotide sequence ID" value="NC_003112.2"/>
</dbReference>
<dbReference type="STRING" id="122586.NMB1645"/>
<dbReference type="PaxDb" id="122586-NMB1645"/>
<dbReference type="KEGG" id="nme:NMB1645"/>
<dbReference type="PATRIC" id="fig|122586.8.peg.2117"/>
<dbReference type="HOGENOM" id="CLU_044847_0_0_4"/>
<dbReference type="InParanoid" id="Q9JYD0"/>
<dbReference type="OrthoDB" id="6210861at2"/>
<dbReference type="Proteomes" id="UP000000425">
    <property type="component" value="Chromosome"/>
</dbReference>
<dbReference type="GO" id="GO:0016020">
    <property type="term" value="C:membrane"/>
    <property type="evidence" value="ECO:0007669"/>
    <property type="project" value="UniProtKB-SubCell"/>
</dbReference>
<dbReference type="InterPro" id="IPR021296">
    <property type="entry name" value="DUF2868"/>
</dbReference>
<dbReference type="Pfam" id="PF11067">
    <property type="entry name" value="DUF2868"/>
    <property type="match status" value="1"/>
</dbReference>
<proteinExistence type="evidence at protein level"/>
<comment type="subcellular location">
    <subcellularLocation>
        <location evidence="2">Membrane</location>
        <topology evidence="2">Multi-pass membrane protein</topology>
    </subcellularLocation>
</comment>
<comment type="miscellaneous">
    <text>Present in outer membrane vesicle formulations which are used as vaccines in human.</text>
</comment>
<gene>
    <name type="ordered locus">NMB1645</name>
</gene>
<name>Y1645_NEIMB</name>
<protein>
    <recommendedName>
        <fullName>Uncharacterized membrane protein NMB1645</fullName>
    </recommendedName>
</protein>
<reference key="1">
    <citation type="journal article" date="2000" name="Science">
        <title>Complete genome sequence of Neisseria meningitidis serogroup B strain MC58.</title>
        <authorList>
            <person name="Tettelin H."/>
            <person name="Saunders N.J."/>
            <person name="Heidelberg J.F."/>
            <person name="Jeffries A.C."/>
            <person name="Nelson K.E."/>
            <person name="Eisen J.A."/>
            <person name="Ketchum K.A."/>
            <person name="Hood D.W."/>
            <person name="Peden J.F."/>
            <person name="Dodson R.J."/>
            <person name="Nelson W.C."/>
            <person name="Gwinn M.L."/>
            <person name="DeBoy R.T."/>
            <person name="Peterson J.D."/>
            <person name="Hickey E.K."/>
            <person name="Haft D.H."/>
            <person name="Salzberg S.L."/>
            <person name="White O."/>
            <person name="Fleischmann R.D."/>
            <person name="Dougherty B.A."/>
            <person name="Mason T.M."/>
            <person name="Ciecko A."/>
            <person name="Parksey D.S."/>
            <person name="Blair E."/>
            <person name="Cittone H."/>
            <person name="Clark E.B."/>
            <person name="Cotton M.D."/>
            <person name="Utterback T.R."/>
            <person name="Khouri H.M."/>
            <person name="Qin H."/>
            <person name="Vamathevan J.J."/>
            <person name="Gill J."/>
            <person name="Scarlato V."/>
            <person name="Masignani V."/>
            <person name="Pizza M."/>
            <person name="Grandi G."/>
            <person name="Sun L."/>
            <person name="Smith H.O."/>
            <person name="Fraser C.M."/>
            <person name="Moxon E.R."/>
            <person name="Rappuoli R."/>
            <person name="Venter J.C."/>
        </authorList>
    </citation>
    <scope>NUCLEOTIDE SEQUENCE [LARGE SCALE GENOMIC DNA]</scope>
    <source>
        <strain>ATCC BAA-335 / MC58</strain>
    </source>
</reference>
<reference key="2">
    <citation type="journal article" date="2005" name="Hum. Vaccin.">
        <title>Characterization of the protein content of a meningococcal outer membrane vesicle vaccine by polyacrylamide gel electrophoresis and mass spectrometry.</title>
        <authorList>
            <person name="Vipond C."/>
            <person name="Wheeler J.X."/>
            <person name="Jones C."/>
            <person name="Feavers I.M."/>
            <person name="Suker J."/>
        </authorList>
    </citation>
    <scope>IDENTIFICATION BY MASS SPECTROMETRY [LARGE SCALE ANALYSIS]</scope>
</reference>